<dbReference type="EC" id="3.6.4.13"/>
<dbReference type="EMBL" id="U17979">
    <property type="protein sequence ID" value="AAA82736.1"/>
    <property type="molecule type" value="mRNA"/>
</dbReference>
<dbReference type="SMR" id="Q41741"/>
<dbReference type="STRING" id="4577.Q41741"/>
<dbReference type="PaxDb" id="4577-GRMZM2G027995_P02"/>
<dbReference type="MaizeGDB" id="112980"/>
<dbReference type="eggNOG" id="KOG0327">
    <property type="taxonomic scope" value="Eukaryota"/>
</dbReference>
<dbReference type="InParanoid" id="Q41741"/>
<dbReference type="Proteomes" id="UP000007305">
    <property type="component" value="Unplaced"/>
</dbReference>
<dbReference type="ExpressionAtlas" id="Q41741">
    <property type="expression patterns" value="baseline and differential"/>
</dbReference>
<dbReference type="GO" id="GO:0010494">
    <property type="term" value="C:cytoplasmic stress granule"/>
    <property type="evidence" value="ECO:0000318"/>
    <property type="project" value="GO_Central"/>
</dbReference>
<dbReference type="GO" id="GO:0005524">
    <property type="term" value="F:ATP binding"/>
    <property type="evidence" value="ECO:0007669"/>
    <property type="project" value="UniProtKB-KW"/>
</dbReference>
<dbReference type="GO" id="GO:0016887">
    <property type="term" value="F:ATP hydrolysis activity"/>
    <property type="evidence" value="ECO:0007669"/>
    <property type="project" value="RHEA"/>
</dbReference>
<dbReference type="GO" id="GO:0003723">
    <property type="term" value="F:RNA binding"/>
    <property type="evidence" value="ECO:0007669"/>
    <property type="project" value="UniProtKB-KW"/>
</dbReference>
<dbReference type="GO" id="GO:0003724">
    <property type="term" value="F:RNA helicase activity"/>
    <property type="evidence" value="ECO:0007669"/>
    <property type="project" value="UniProtKB-EC"/>
</dbReference>
<dbReference type="GO" id="GO:0003743">
    <property type="term" value="F:translation initiation factor activity"/>
    <property type="evidence" value="ECO:0000318"/>
    <property type="project" value="GO_Central"/>
</dbReference>
<dbReference type="GO" id="GO:0002183">
    <property type="term" value="P:cytoplasmic translational initiation"/>
    <property type="evidence" value="ECO:0000318"/>
    <property type="project" value="GO_Central"/>
</dbReference>
<dbReference type="CDD" id="cd17939">
    <property type="entry name" value="DEADc_EIF4A"/>
    <property type="match status" value="1"/>
</dbReference>
<dbReference type="CDD" id="cd18787">
    <property type="entry name" value="SF2_C_DEAD"/>
    <property type="match status" value="1"/>
</dbReference>
<dbReference type="FunFam" id="3.40.50.300:FF:000089">
    <property type="entry name" value="Eukaryotic initiation factor 4A-II"/>
    <property type="match status" value="1"/>
</dbReference>
<dbReference type="FunFam" id="3.40.50.300:FF:000031">
    <property type="entry name" value="Eukaryotic initiation factor 4A-III"/>
    <property type="match status" value="1"/>
</dbReference>
<dbReference type="Gene3D" id="3.40.50.300">
    <property type="entry name" value="P-loop containing nucleotide triphosphate hydrolases"/>
    <property type="match status" value="2"/>
</dbReference>
<dbReference type="InterPro" id="IPR011545">
    <property type="entry name" value="DEAD/DEAH_box_helicase_dom"/>
</dbReference>
<dbReference type="InterPro" id="IPR014001">
    <property type="entry name" value="Helicase_ATP-bd"/>
</dbReference>
<dbReference type="InterPro" id="IPR001650">
    <property type="entry name" value="Helicase_C-like"/>
</dbReference>
<dbReference type="InterPro" id="IPR027417">
    <property type="entry name" value="P-loop_NTPase"/>
</dbReference>
<dbReference type="InterPro" id="IPR000629">
    <property type="entry name" value="RNA-helicase_DEAD-box_CS"/>
</dbReference>
<dbReference type="InterPro" id="IPR014014">
    <property type="entry name" value="RNA_helicase_DEAD_Q_motif"/>
</dbReference>
<dbReference type="PANTHER" id="PTHR47958">
    <property type="entry name" value="ATP-DEPENDENT RNA HELICASE DBP3"/>
    <property type="match status" value="1"/>
</dbReference>
<dbReference type="Pfam" id="PF00270">
    <property type="entry name" value="DEAD"/>
    <property type="match status" value="1"/>
</dbReference>
<dbReference type="Pfam" id="PF00271">
    <property type="entry name" value="Helicase_C"/>
    <property type="match status" value="1"/>
</dbReference>
<dbReference type="SMART" id="SM00487">
    <property type="entry name" value="DEXDc"/>
    <property type="match status" value="1"/>
</dbReference>
<dbReference type="SMART" id="SM00490">
    <property type="entry name" value="HELICc"/>
    <property type="match status" value="1"/>
</dbReference>
<dbReference type="SUPFAM" id="SSF52540">
    <property type="entry name" value="P-loop containing nucleoside triphosphate hydrolases"/>
    <property type="match status" value="1"/>
</dbReference>
<dbReference type="PROSITE" id="PS00039">
    <property type="entry name" value="DEAD_ATP_HELICASE"/>
    <property type="match status" value="1"/>
</dbReference>
<dbReference type="PROSITE" id="PS51192">
    <property type="entry name" value="HELICASE_ATP_BIND_1"/>
    <property type="match status" value="1"/>
</dbReference>
<dbReference type="PROSITE" id="PS51194">
    <property type="entry name" value="HELICASE_CTER"/>
    <property type="match status" value="1"/>
</dbReference>
<dbReference type="PROSITE" id="PS51195">
    <property type="entry name" value="Q_MOTIF"/>
    <property type="match status" value="1"/>
</dbReference>
<accession>Q41741</accession>
<name>IF4A_MAIZE</name>
<reference key="1">
    <citation type="journal article" date="1995" name="Plant Physiol.">
        <title>Nucleotide sequence of a cDNA for the maize protein synthesis initiation factor 4A.</title>
        <authorList>
            <person name="Jayachandran S."/>
            <person name="Bailey-Serres J."/>
        </authorList>
    </citation>
    <scope>NUCLEOTIDE SEQUENCE [MRNA]</scope>
    <source>
        <tissue>Ear of corn</tissue>
    </source>
</reference>
<organism>
    <name type="scientific">Zea mays</name>
    <name type="common">Maize</name>
    <dbReference type="NCBI Taxonomy" id="4577"/>
    <lineage>
        <taxon>Eukaryota</taxon>
        <taxon>Viridiplantae</taxon>
        <taxon>Streptophyta</taxon>
        <taxon>Embryophyta</taxon>
        <taxon>Tracheophyta</taxon>
        <taxon>Spermatophyta</taxon>
        <taxon>Magnoliopsida</taxon>
        <taxon>Liliopsida</taxon>
        <taxon>Poales</taxon>
        <taxon>Poaceae</taxon>
        <taxon>PACMAD clade</taxon>
        <taxon>Panicoideae</taxon>
        <taxon>Andropogonodae</taxon>
        <taxon>Andropogoneae</taxon>
        <taxon>Tripsacinae</taxon>
        <taxon>Zea</taxon>
    </lineage>
</organism>
<feature type="chain" id="PRO_0000054962" description="Eukaryotic initiation factor 4A">
    <location>
        <begin position="1"/>
        <end position="410"/>
    </location>
</feature>
<feature type="domain" description="Helicase ATP-binding" evidence="2">
    <location>
        <begin position="68"/>
        <end position="238"/>
    </location>
</feature>
<feature type="domain" description="Helicase C-terminal" evidence="3">
    <location>
        <begin position="249"/>
        <end position="410"/>
    </location>
</feature>
<feature type="short sequence motif" description="Q motif">
    <location>
        <begin position="37"/>
        <end position="65"/>
    </location>
</feature>
<feature type="short sequence motif" description="DEAD box">
    <location>
        <begin position="186"/>
        <end position="189"/>
    </location>
</feature>
<feature type="binding site" evidence="2">
    <location>
        <begin position="81"/>
        <end position="88"/>
    </location>
    <ligand>
        <name>ATP</name>
        <dbReference type="ChEBI" id="CHEBI:30616"/>
    </ligand>
</feature>
<protein>
    <recommendedName>
        <fullName>Eukaryotic initiation factor 4A</fullName>
        <shortName>eIF-4A</shortName>
        <ecNumber>3.6.4.13</ecNumber>
    </recommendedName>
    <alternativeName>
        <fullName>ATP-dependent RNA helicase eIF4A</fullName>
    </alternativeName>
</protein>
<comment type="function">
    <text evidence="1">ATP-dependent RNA helicase which is a subunit of the eIF4F complex involved in cap recognition and is required for mRNA binding to ribosome. In the current model of translation initiation, eIF4A unwinds RNA secondary structures in the 5'-UTR of mRNAs which is necessary to allow efficient binding of the small ribosomal subunit, and subsequent scanning for the initiator codon (By similarity).</text>
</comment>
<comment type="catalytic activity">
    <reaction>
        <text>ATP + H2O = ADP + phosphate + H(+)</text>
        <dbReference type="Rhea" id="RHEA:13065"/>
        <dbReference type="ChEBI" id="CHEBI:15377"/>
        <dbReference type="ChEBI" id="CHEBI:15378"/>
        <dbReference type="ChEBI" id="CHEBI:30616"/>
        <dbReference type="ChEBI" id="CHEBI:43474"/>
        <dbReference type="ChEBI" id="CHEBI:456216"/>
        <dbReference type="EC" id="3.6.4.13"/>
    </reaction>
</comment>
<comment type="subunit">
    <text evidence="1">eIF4F is a multi-subunit complex, the composition of which varies with external and internal environmental conditions. It is composed of at least EIF4A, EIF4E and EIF4G (By similarity).</text>
</comment>
<comment type="similarity">
    <text evidence="4">Belongs to the DEAD box helicase family. eIF4A subfamily.</text>
</comment>
<evidence type="ECO:0000250" key="1"/>
<evidence type="ECO:0000255" key="2">
    <source>
        <dbReference type="PROSITE-ProRule" id="PRU00541"/>
    </source>
</evidence>
<evidence type="ECO:0000255" key="3">
    <source>
        <dbReference type="PROSITE-ProRule" id="PRU00542"/>
    </source>
</evidence>
<evidence type="ECO:0000305" key="4"/>
<keyword id="KW-0067">ATP-binding</keyword>
<keyword id="KW-0347">Helicase</keyword>
<keyword id="KW-0378">Hydrolase</keyword>
<keyword id="KW-0396">Initiation factor</keyword>
<keyword id="KW-0547">Nucleotide-binding</keyword>
<keyword id="KW-0648">Protein biosynthesis</keyword>
<keyword id="KW-1185">Reference proteome</keyword>
<keyword id="KW-0694">RNA-binding</keyword>
<proteinExistence type="evidence at transcript level"/>
<sequence length="410" mass="46536">MAGLAPEGSQFDDKQYDKKMQEILTEDFFTSYDDVCESFDSMGLQENLLRGIYAYGFEKPSAIQQRGIVPFCKGLDVIQQAQSGTGKTATFCSGILQQLDYGLVECQALVLAPTRELAQQIEKVMRALGDYLGVKVHACVGGTSVREDQRILASGVHVVVGTPGRVFDMLRRQSLRPDNIKMFVLDEADEMLSRGFKDQIYDIFQLLPSKIQVGVFSATMPPEALEITRKFMNKPVRILVKRDELTLEGIKQFYVNIDKEDWKLDTLCDLYETLAITQSVIFVNTRRKVDWLTDKMRSRDHTVSATHGDMDQNTRDIIMREFRSGSSRVLITTDLLARGIDVQQVSLVINYDLPTQPENYLHRIGRSGRFGRKGVAINFVTRDDERIVFDVQRFYNVTVEELPANVADLL</sequence>